<feature type="chain" id="PRO_1000141889" description="Large ribosomal subunit protein uL3">
    <location>
        <begin position="1"/>
        <end position="246"/>
    </location>
</feature>
<feature type="region of interest" description="Disordered" evidence="2">
    <location>
        <begin position="140"/>
        <end position="162"/>
    </location>
</feature>
<feature type="modified residue" description="N5-methylglutamine" evidence="1">
    <location>
        <position position="151"/>
    </location>
</feature>
<protein>
    <recommendedName>
        <fullName evidence="1">Large ribosomal subunit protein uL3</fullName>
    </recommendedName>
    <alternativeName>
        <fullName evidence="3">50S ribosomal protein L3</fullName>
    </alternativeName>
</protein>
<gene>
    <name evidence="1" type="primary">rplC</name>
    <name type="ordered locus">M446_0353</name>
</gene>
<dbReference type="EMBL" id="CP000943">
    <property type="protein sequence ID" value="ACA14924.1"/>
    <property type="molecule type" value="Genomic_DNA"/>
</dbReference>
<dbReference type="RefSeq" id="WP_012330342.1">
    <property type="nucleotide sequence ID" value="NC_010511.1"/>
</dbReference>
<dbReference type="SMR" id="B0UHW9"/>
<dbReference type="STRING" id="426117.M446_0353"/>
<dbReference type="KEGG" id="met:M446_0353"/>
<dbReference type="eggNOG" id="COG0087">
    <property type="taxonomic scope" value="Bacteria"/>
</dbReference>
<dbReference type="HOGENOM" id="CLU_044142_2_0_5"/>
<dbReference type="GO" id="GO:0022625">
    <property type="term" value="C:cytosolic large ribosomal subunit"/>
    <property type="evidence" value="ECO:0007669"/>
    <property type="project" value="TreeGrafter"/>
</dbReference>
<dbReference type="GO" id="GO:0019843">
    <property type="term" value="F:rRNA binding"/>
    <property type="evidence" value="ECO:0007669"/>
    <property type="project" value="UniProtKB-UniRule"/>
</dbReference>
<dbReference type="GO" id="GO:0003735">
    <property type="term" value="F:structural constituent of ribosome"/>
    <property type="evidence" value="ECO:0007669"/>
    <property type="project" value="InterPro"/>
</dbReference>
<dbReference type="GO" id="GO:0006412">
    <property type="term" value="P:translation"/>
    <property type="evidence" value="ECO:0007669"/>
    <property type="project" value="UniProtKB-UniRule"/>
</dbReference>
<dbReference type="FunFam" id="2.40.30.10:FF:000004">
    <property type="entry name" value="50S ribosomal protein L3"/>
    <property type="match status" value="1"/>
</dbReference>
<dbReference type="FunFam" id="3.30.160.810:FF:000001">
    <property type="entry name" value="50S ribosomal protein L3"/>
    <property type="match status" value="1"/>
</dbReference>
<dbReference type="Gene3D" id="3.30.160.810">
    <property type="match status" value="1"/>
</dbReference>
<dbReference type="Gene3D" id="2.40.30.10">
    <property type="entry name" value="Translation factors"/>
    <property type="match status" value="1"/>
</dbReference>
<dbReference type="HAMAP" id="MF_01325_B">
    <property type="entry name" value="Ribosomal_uL3_B"/>
    <property type="match status" value="1"/>
</dbReference>
<dbReference type="InterPro" id="IPR000597">
    <property type="entry name" value="Ribosomal_uL3"/>
</dbReference>
<dbReference type="InterPro" id="IPR019927">
    <property type="entry name" value="Ribosomal_uL3_bac/org-type"/>
</dbReference>
<dbReference type="InterPro" id="IPR019926">
    <property type="entry name" value="Ribosomal_uL3_CS"/>
</dbReference>
<dbReference type="InterPro" id="IPR009000">
    <property type="entry name" value="Transl_B-barrel_sf"/>
</dbReference>
<dbReference type="NCBIfam" id="TIGR03625">
    <property type="entry name" value="L3_bact"/>
    <property type="match status" value="1"/>
</dbReference>
<dbReference type="PANTHER" id="PTHR11229">
    <property type="entry name" value="50S RIBOSOMAL PROTEIN L3"/>
    <property type="match status" value="1"/>
</dbReference>
<dbReference type="PANTHER" id="PTHR11229:SF16">
    <property type="entry name" value="LARGE RIBOSOMAL SUBUNIT PROTEIN UL3C"/>
    <property type="match status" value="1"/>
</dbReference>
<dbReference type="Pfam" id="PF00297">
    <property type="entry name" value="Ribosomal_L3"/>
    <property type="match status" value="1"/>
</dbReference>
<dbReference type="SUPFAM" id="SSF50447">
    <property type="entry name" value="Translation proteins"/>
    <property type="match status" value="1"/>
</dbReference>
<dbReference type="PROSITE" id="PS00474">
    <property type="entry name" value="RIBOSOMAL_L3"/>
    <property type="match status" value="1"/>
</dbReference>
<proteinExistence type="inferred from homology"/>
<sequence>MRSGVIAQKVGMTRVFTDAGEHVPVTVLKVDQCQVVAHRTVEKNGYVALQVGVGKAKVKNVSKAERGRFAIAKVEPKRKLAEFRVTEDALIPVGAEITADHFIPGQFVDVTGTTTGKGFAGGMKRWNFGGLRATHGVSISHRSIGSTGGRQDPGKTFKNKKMPGHLGVERVTTQNLRVVRTDPERGLILVEGAVPGVAGGWIQIRDAVKRKLPAEAPMPGKFRELADGAAPAVDAAPEAPAVEENA</sequence>
<comment type="function">
    <text evidence="1">One of the primary rRNA binding proteins, it binds directly near the 3'-end of the 23S rRNA, where it nucleates assembly of the 50S subunit.</text>
</comment>
<comment type="subunit">
    <text evidence="1">Part of the 50S ribosomal subunit. Forms a cluster with proteins L14 and L19.</text>
</comment>
<comment type="PTM">
    <text evidence="1">Methylated by PrmB.</text>
</comment>
<comment type="similarity">
    <text evidence="1">Belongs to the universal ribosomal protein uL3 family.</text>
</comment>
<name>RL3_METS4</name>
<organism>
    <name type="scientific">Methylobacterium sp. (strain 4-46)</name>
    <dbReference type="NCBI Taxonomy" id="426117"/>
    <lineage>
        <taxon>Bacteria</taxon>
        <taxon>Pseudomonadati</taxon>
        <taxon>Pseudomonadota</taxon>
        <taxon>Alphaproteobacteria</taxon>
        <taxon>Hyphomicrobiales</taxon>
        <taxon>Methylobacteriaceae</taxon>
        <taxon>Methylobacterium</taxon>
    </lineage>
</organism>
<keyword id="KW-0488">Methylation</keyword>
<keyword id="KW-0687">Ribonucleoprotein</keyword>
<keyword id="KW-0689">Ribosomal protein</keyword>
<keyword id="KW-0694">RNA-binding</keyword>
<keyword id="KW-0699">rRNA-binding</keyword>
<evidence type="ECO:0000255" key="1">
    <source>
        <dbReference type="HAMAP-Rule" id="MF_01325"/>
    </source>
</evidence>
<evidence type="ECO:0000256" key="2">
    <source>
        <dbReference type="SAM" id="MobiDB-lite"/>
    </source>
</evidence>
<evidence type="ECO:0000305" key="3"/>
<accession>B0UHW9</accession>
<reference key="1">
    <citation type="submission" date="2008-02" db="EMBL/GenBank/DDBJ databases">
        <title>Complete sequence of chromosome of Methylobacterium sp. 4-46.</title>
        <authorList>
            <consortium name="US DOE Joint Genome Institute"/>
            <person name="Copeland A."/>
            <person name="Lucas S."/>
            <person name="Lapidus A."/>
            <person name="Glavina del Rio T."/>
            <person name="Dalin E."/>
            <person name="Tice H."/>
            <person name="Bruce D."/>
            <person name="Goodwin L."/>
            <person name="Pitluck S."/>
            <person name="Chertkov O."/>
            <person name="Brettin T."/>
            <person name="Detter J.C."/>
            <person name="Han C."/>
            <person name="Kuske C.R."/>
            <person name="Schmutz J."/>
            <person name="Larimer F."/>
            <person name="Land M."/>
            <person name="Hauser L."/>
            <person name="Kyrpides N."/>
            <person name="Ivanova N."/>
            <person name="Marx C.J."/>
            <person name="Richardson P."/>
        </authorList>
    </citation>
    <scope>NUCLEOTIDE SEQUENCE [LARGE SCALE GENOMIC DNA]</scope>
    <source>
        <strain>4-46</strain>
    </source>
</reference>